<protein>
    <recommendedName>
        <fullName evidence="10 11">Peptide methionine sulfoxide reductase B1, chloroplastic</fullName>
        <shortName evidence="10 11">AtMSRB1</shortName>
        <ecNumber evidence="5 6 7">1.8.4.12</ecNumber>
    </recommendedName>
    <alternativeName>
        <fullName>Peptide-methionine (R)-S-oxide reductase</fullName>
    </alternativeName>
</protein>
<evidence type="ECO:0000250" key="1">
    <source>
        <dbReference type="UniProtKB" id="P0A746"/>
    </source>
</evidence>
<evidence type="ECO:0000255" key="2"/>
<evidence type="ECO:0000255" key="3">
    <source>
        <dbReference type="PROSITE-ProRule" id="PRU01126"/>
    </source>
</evidence>
<evidence type="ECO:0000256" key="4">
    <source>
        <dbReference type="SAM" id="MobiDB-lite"/>
    </source>
</evidence>
<evidence type="ECO:0000269" key="5">
    <source>
    </source>
</evidence>
<evidence type="ECO:0000269" key="6">
    <source>
    </source>
</evidence>
<evidence type="ECO:0000269" key="7">
    <source>
    </source>
</evidence>
<evidence type="ECO:0000269" key="8">
    <source>
    </source>
</evidence>
<evidence type="ECO:0000269" key="9">
    <source>
    </source>
</evidence>
<evidence type="ECO:0000303" key="10">
    <source>
    </source>
</evidence>
<evidence type="ECO:0000303" key="11">
    <source>
    </source>
</evidence>
<evidence type="ECO:0000303" key="12">
    <source ref="3"/>
</evidence>
<evidence type="ECO:0000305" key="13"/>
<evidence type="ECO:0000312" key="14">
    <source>
        <dbReference type="Araport" id="AT1G53670"/>
    </source>
</evidence>
<evidence type="ECO:0000312" key="15">
    <source>
        <dbReference type="EMBL" id="AAG51964.1"/>
    </source>
</evidence>
<sequence length="202" mass="22607">MASSTRLTIIQSSFVSARTRLNYVSKTNHSGFACRSLSKPRNLSLSVYSMGSSSSSPKPDNVQEAEKNEFASLSENEWKKRLTPEQYYITRQKGTERAFTGEYWNSKTPGVYNCVCCDTPLFDSSTKFDSGTGWPSYYQPIGNNVKTKLDLSIIFMPRQEVVCAVCNAHLGHVFDDGPRPTGKRYCLNSAALKLNALEKTRD</sequence>
<gene>
    <name evidence="10 11" type="primary">MSRB1</name>
    <name evidence="14" type="ordered locus">At1g53670</name>
    <name evidence="15" type="ORF">F22G10.17</name>
</gene>
<reference key="1">
    <citation type="journal article" date="2000" name="Nature">
        <title>Sequence and analysis of chromosome 1 of the plant Arabidopsis thaliana.</title>
        <authorList>
            <person name="Theologis A."/>
            <person name="Ecker J.R."/>
            <person name="Palm C.J."/>
            <person name="Federspiel N.A."/>
            <person name="Kaul S."/>
            <person name="White O."/>
            <person name="Alonso J."/>
            <person name="Altafi H."/>
            <person name="Araujo R."/>
            <person name="Bowman C.L."/>
            <person name="Brooks S.Y."/>
            <person name="Buehler E."/>
            <person name="Chan A."/>
            <person name="Chao Q."/>
            <person name="Chen H."/>
            <person name="Cheuk R.F."/>
            <person name="Chin C.W."/>
            <person name="Chung M.K."/>
            <person name="Conn L."/>
            <person name="Conway A.B."/>
            <person name="Conway A.R."/>
            <person name="Creasy T.H."/>
            <person name="Dewar K."/>
            <person name="Dunn P."/>
            <person name="Etgu P."/>
            <person name="Feldblyum T.V."/>
            <person name="Feng J.-D."/>
            <person name="Fong B."/>
            <person name="Fujii C.Y."/>
            <person name="Gill J.E."/>
            <person name="Goldsmith A.D."/>
            <person name="Haas B."/>
            <person name="Hansen N.F."/>
            <person name="Hughes B."/>
            <person name="Huizar L."/>
            <person name="Hunter J.L."/>
            <person name="Jenkins J."/>
            <person name="Johnson-Hopson C."/>
            <person name="Khan S."/>
            <person name="Khaykin E."/>
            <person name="Kim C.J."/>
            <person name="Koo H.L."/>
            <person name="Kremenetskaia I."/>
            <person name="Kurtz D.B."/>
            <person name="Kwan A."/>
            <person name="Lam B."/>
            <person name="Langin-Hooper S."/>
            <person name="Lee A."/>
            <person name="Lee J.M."/>
            <person name="Lenz C.A."/>
            <person name="Li J.H."/>
            <person name="Li Y.-P."/>
            <person name="Lin X."/>
            <person name="Liu S.X."/>
            <person name="Liu Z.A."/>
            <person name="Luros J.S."/>
            <person name="Maiti R."/>
            <person name="Marziali A."/>
            <person name="Militscher J."/>
            <person name="Miranda M."/>
            <person name="Nguyen M."/>
            <person name="Nierman W.C."/>
            <person name="Osborne B.I."/>
            <person name="Pai G."/>
            <person name="Peterson J."/>
            <person name="Pham P.K."/>
            <person name="Rizzo M."/>
            <person name="Rooney T."/>
            <person name="Rowley D."/>
            <person name="Sakano H."/>
            <person name="Salzberg S.L."/>
            <person name="Schwartz J.R."/>
            <person name="Shinn P."/>
            <person name="Southwick A.M."/>
            <person name="Sun H."/>
            <person name="Tallon L.J."/>
            <person name="Tambunga G."/>
            <person name="Toriumi M.J."/>
            <person name="Town C.D."/>
            <person name="Utterback T."/>
            <person name="Van Aken S."/>
            <person name="Vaysberg M."/>
            <person name="Vysotskaia V.S."/>
            <person name="Walker M."/>
            <person name="Wu D."/>
            <person name="Yu G."/>
            <person name="Fraser C.M."/>
            <person name="Venter J.C."/>
            <person name="Davis R.W."/>
        </authorList>
    </citation>
    <scope>NUCLEOTIDE SEQUENCE [LARGE SCALE GENOMIC DNA]</scope>
    <source>
        <strain>cv. Columbia</strain>
    </source>
</reference>
<reference key="2">
    <citation type="journal article" date="2017" name="Plant J.">
        <title>Araport11: a complete reannotation of the Arabidopsis thaliana reference genome.</title>
        <authorList>
            <person name="Cheng C.Y."/>
            <person name="Krishnakumar V."/>
            <person name="Chan A.P."/>
            <person name="Thibaud-Nissen F."/>
            <person name="Schobel S."/>
            <person name="Town C.D."/>
        </authorList>
    </citation>
    <scope>GENOME REANNOTATION</scope>
    <source>
        <strain>cv. Columbia</strain>
    </source>
</reference>
<reference key="3">
    <citation type="submission" date="2007-06" db="EMBL/GenBank/DDBJ databases">
        <title>Arabidopsis ORF clones.</title>
        <authorList>
            <person name="Bautista V.R."/>
            <person name="Kim C.J."/>
            <person name="Chen H."/>
            <person name="Quan R."/>
            <person name="De Los Reyes C."/>
            <person name="Ecker J.R."/>
        </authorList>
    </citation>
    <scope>NUCLEOTIDE SEQUENCE [LARGE SCALE MRNA] (ISOFORM 2)</scope>
    <source>
        <strain>cv. Columbia</strain>
    </source>
</reference>
<reference key="4">
    <citation type="submission" date="2002-03" db="EMBL/GenBank/DDBJ databases">
        <title>Full-length cDNA from Arabidopsis thaliana.</title>
        <authorList>
            <person name="Brover V.V."/>
            <person name="Troukhan M.E."/>
            <person name="Alexandrov N.A."/>
            <person name="Lu Y.-P."/>
            <person name="Flavell R.B."/>
            <person name="Feldmann K.A."/>
        </authorList>
    </citation>
    <scope>NUCLEOTIDE SEQUENCE [LARGE SCALE MRNA] OF 5-202 (ISOFORM 1)</scope>
</reference>
<reference key="5">
    <citation type="journal article" date="2002" name="Science">
        <title>Functional annotation of a full-length Arabidopsis cDNA collection.</title>
        <authorList>
            <person name="Seki M."/>
            <person name="Narusaka M."/>
            <person name="Kamiya A."/>
            <person name="Ishida J."/>
            <person name="Satou M."/>
            <person name="Sakurai T."/>
            <person name="Nakajima M."/>
            <person name="Enju A."/>
            <person name="Akiyama K."/>
            <person name="Oono Y."/>
            <person name="Muramatsu M."/>
            <person name="Hayashizaki Y."/>
            <person name="Kawai J."/>
            <person name="Carninci P."/>
            <person name="Itoh M."/>
            <person name="Ishii Y."/>
            <person name="Arakawa T."/>
            <person name="Shibata K."/>
            <person name="Shinagawa A."/>
            <person name="Shinozaki K."/>
        </authorList>
    </citation>
    <scope>NUCLEOTIDE SEQUENCE [LARGE SCALE MRNA] OF 6-202 (ISOFORM 1)</scope>
    <source>
        <strain>cv. Columbia</strain>
    </source>
</reference>
<reference key="6">
    <citation type="journal article" date="2005" name="Plant Physiol.">
        <title>The Arabidopsis plastidic methionine sulfoxide reductase B proteins. Sequence and activity characteristics, comparison of the expression with plastidic methionine sulfoxide reductase A, and induction by photooxidative stress.</title>
        <authorList>
            <person name="Vieira Dos Santos C."/>
            <person name="Cuine S."/>
            <person name="Rouhier N."/>
            <person name="Rey P."/>
        </authorList>
    </citation>
    <scope>FUNCTION</scope>
    <scope>BIOPHYSICOCHEMICAL PROPERTIES</scope>
    <scope>SUBCELLULAR LOCATION</scope>
    <scope>TISSUE SPECIFICITY</scope>
    <scope>INDUCTION</scope>
</reference>
<reference key="7">
    <citation type="journal article" date="2006" name="Photosyn. Res.">
        <title>Plant methionine sulfoxide reductase A and B multigenic families.</title>
        <authorList>
            <person name="Rouhier N."/>
            <person name="Vieira Dos Santos C."/>
            <person name="Tarrago L."/>
            <person name="Rey P."/>
        </authorList>
    </citation>
    <scope>GENE FAMILY</scope>
    <scope>NOMENCLATURE</scope>
</reference>
<reference key="8">
    <citation type="journal article" date="2007" name="FEBS Lett.">
        <title>Specificity of thioredoxins and glutaredoxins as electron donors to two distinct classes of Arabidopsis plastidial methionine sulfoxide reductases B.</title>
        <authorList>
            <person name="Vieira Dos Santos C."/>
            <person name="Laugier E."/>
            <person name="Tarrago L."/>
            <person name="Massot V."/>
            <person name="Issakidis-Bourguet E."/>
            <person name="Rouhier N."/>
            <person name="Rey P."/>
        </authorList>
    </citation>
    <scope>FUNCTION</scope>
    <scope>CATALYTIC ACTIVITY</scope>
</reference>
<reference key="9">
    <citation type="journal article" date="2009" name="J. Biol. Chem.">
        <title>Regeneration mechanisms of Arabidopsis thaliana methionine sulfoxide reductases B by glutaredoxins and thioredoxins.</title>
        <authorList>
            <person name="Tarrago L."/>
            <person name="Laugier E."/>
            <person name="Zaffagnini M."/>
            <person name="Marchand C."/>
            <person name="Le Marechal P."/>
            <person name="Rouhier N."/>
            <person name="Lemaire S.D."/>
            <person name="Rey P."/>
        </authorList>
    </citation>
    <scope>FUNCTION</scope>
    <scope>MUTAGENESIS OF CYS-116; THR-132 AND CYS-186</scope>
    <scope>CATALYTIC ACTIVITY</scope>
    <scope>BIOPHYSICOCHEMICAL PROPERTIES</scope>
</reference>
<reference key="10">
    <citation type="journal article" date="2010" name="J. Biol. Chem.">
        <title>Plant thioredoxin CDSP32 regenerates 1-Cys methionine sulfoxide reductase B activity through the direct reduction of sulfenic acid.</title>
        <authorList>
            <person name="Tarrago L."/>
            <person name="Laugier E."/>
            <person name="Zaffagnini M."/>
            <person name="Marchand C.H."/>
            <person name="Le Marechal P."/>
            <person name="Lemaire S.D."/>
            <person name="Rey P."/>
        </authorList>
    </citation>
    <scope>FUNCTION</scope>
    <scope>MUTAGENESIS OF CYS-186</scope>
</reference>
<reference key="11">
    <citation type="journal article" date="2010" name="Plant J.">
        <title>Arabidopsis thaliana plastidial methionine sulfoxide reductases B, MSRBs, account for most leaf peptide MSR activity and are essential for growth under environmental constraints through a role in the preservation of photosystem antennas.</title>
        <authorList>
            <person name="Laugier E."/>
            <person name="Tarrago L."/>
            <person name="Vieira Dos Santos C."/>
            <person name="Eymery F."/>
            <person name="Havaux M."/>
            <person name="Rey P."/>
        </authorList>
    </citation>
    <scope>FUNCTION</scope>
</reference>
<keyword id="KW-0025">Alternative splicing</keyword>
<keyword id="KW-0150">Chloroplast</keyword>
<keyword id="KW-0249">Electron transport</keyword>
<keyword id="KW-0479">Metal-binding</keyword>
<keyword id="KW-0560">Oxidoreductase</keyword>
<keyword id="KW-0934">Plastid</keyword>
<keyword id="KW-0676">Redox-active center</keyword>
<keyword id="KW-1185">Reference proteome</keyword>
<keyword id="KW-0809">Transit peptide</keyword>
<keyword id="KW-0813">Transport</keyword>
<keyword id="KW-0862">Zinc</keyword>
<name>MSRB1_ARATH</name>
<organism>
    <name type="scientific">Arabidopsis thaliana</name>
    <name type="common">Mouse-ear cress</name>
    <dbReference type="NCBI Taxonomy" id="3702"/>
    <lineage>
        <taxon>Eukaryota</taxon>
        <taxon>Viridiplantae</taxon>
        <taxon>Streptophyta</taxon>
        <taxon>Embryophyta</taxon>
        <taxon>Tracheophyta</taxon>
        <taxon>Spermatophyta</taxon>
        <taxon>Magnoliopsida</taxon>
        <taxon>eudicotyledons</taxon>
        <taxon>Gunneridae</taxon>
        <taxon>Pentapetalae</taxon>
        <taxon>rosids</taxon>
        <taxon>malvids</taxon>
        <taxon>Brassicales</taxon>
        <taxon>Brassicaceae</taxon>
        <taxon>Camelineae</taxon>
        <taxon>Arabidopsis</taxon>
    </lineage>
</organism>
<dbReference type="EC" id="1.8.4.12" evidence="5 6 7"/>
<dbReference type="EMBL" id="AC024260">
    <property type="protein sequence ID" value="AAG51964.1"/>
    <property type="molecule type" value="Genomic_DNA"/>
</dbReference>
<dbReference type="EMBL" id="CP002684">
    <property type="protein sequence ID" value="AEE32979.1"/>
    <property type="molecule type" value="Genomic_DNA"/>
</dbReference>
<dbReference type="EMBL" id="CP002684">
    <property type="protein sequence ID" value="AEE32980.1"/>
    <property type="molecule type" value="Genomic_DNA"/>
</dbReference>
<dbReference type="EMBL" id="BT030636">
    <property type="protein sequence ID" value="ABR46216.1"/>
    <property type="molecule type" value="mRNA"/>
</dbReference>
<dbReference type="EMBL" id="AY087664">
    <property type="protein sequence ID" value="AAM65202.1"/>
    <property type="status" value="ALT_INIT"/>
    <property type="molecule type" value="mRNA"/>
</dbReference>
<dbReference type="EMBL" id="AK117314">
    <property type="protein sequence ID" value="BAC41985.1"/>
    <property type="status" value="ALT_INIT"/>
    <property type="molecule type" value="mRNA"/>
</dbReference>
<dbReference type="PIR" id="H96576">
    <property type="entry name" value="H96576"/>
</dbReference>
<dbReference type="RefSeq" id="NP_001117484.1">
    <molecule id="Q9C8M2-2"/>
    <property type="nucleotide sequence ID" value="NM_001124012.1"/>
</dbReference>
<dbReference type="RefSeq" id="NP_564640.2">
    <molecule id="Q9C8M2-1"/>
    <property type="nucleotide sequence ID" value="NM_104245.4"/>
</dbReference>
<dbReference type="SMR" id="Q9C8M2"/>
<dbReference type="BioGRID" id="27029">
    <property type="interactions" value="1"/>
</dbReference>
<dbReference type="FunCoup" id="Q9C8M2">
    <property type="interactions" value="623"/>
</dbReference>
<dbReference type="STRING" id="3702.Q9C8M2"/>
<dbReference type="PaxDb" id="3702-AT1G53670.1"/>
<dbReference type="ProteomicsDB" id="250793">
    <molecule id="Q9C8M2-1"/>
</dbReference>
<dbReference type="EnsemblPlants" id="AT1G53670.1">
    <molecule id="Q9C8M2-1"/>
    <property type="protein sequence ID" value="AT1G53670.1"/>
    <property type="gene ID" value="AT1G53670"/>
</dbReference>
<dbReference type="EnsemblPlants" id="AT1G53670.2">
    <molecule id="Q9C8M2-2"/>
    <property type="protein sequence ID" value="AT1G53670.2"/>
    <property type="gene ID" value="AT1G53670"/>
</dbReference>
<dbReference type="GeneID" id="841804"/>
<dbReference type="Gramene" id="AT1G53670.1">
    <molecule id="Q9C8M2-1"/>
    <property type="protein sequence ID" value="AT1G53670.1"/>
    <property type="gene ID" value="AT1G53670"/>
</dbReference>
<dbReference type="Gramene" id="AT1G53670.2">
    <molecule id="Q9C8M2-2"/>
    <property type="protein sequence ID" value="AT1G53670.2"/>
    <property type="gene ID" value="AT1G53670"/>
</dbReference>
<dbReference type="KEGG" id="ath:AT1G53670"/>
<dbReference type="Araport" id="AT1G53670"/>
<dbReference type="TAIR" id="AT1G53670">
    <property type="gene designation" value="MSRB1"/>
</dbReference>
<dbReference type="eggNOG" id="KOG0856">
    <property type="taxonomic scope" value="Eukaryota"/>
</dbReference>
<dbReference type="HOGENOM" id="CLU_031040_8_0_1"/>
<dbReference type="InParanoid" id="Q9C8M2"/>
<dbReference type="OMA" id="LCVCCKT"/>
<dbReference type="PhylomeDB" id="Q9C8M2"/>
<dbReference type="SABIO-RK" id="Q9C8M2"/>
<dbReference type="PRO" id="PR:Q9C8M2"/>
<dbReference type="Proteomes" id="UP000006548">
    <property type="component" value="Chromosome 1"/>
</dbReference>
<dbReference type="ExpressionAtlas" id="Q9C8M2">
    <property type="expression patterns" value="baseline and differential"/>
</dbReference>
<dbReference type="GO" id="GO:0009507">
    <property type="term" value="C:chloroplast"/>
    <property type="evidence" value="ECO:0000314"/>
    <property type="project" value="UniProtKB"/>
</dbReference>
<dbReference type="GO" id="GO:0009570">
    <property type="term" value="C:chloroplast stroma"/>
    <property type="evidence" value="ECO:0007005"/>
    <property type="project" value="TAIR"/>
</dbReference>
<dbReference type="GO" id="GO:0046872">
    <property type="term" value="F:metal ion binding"/>
    <property type="evidence" value="ECO:0007669"/>
    <property type="project" value="UniProtKB-KW"/>
</dbReference>
<dbReference type="GO" id="GO:0033743">
    <property type="term" value="F:peptide-methionine (R)-S-oxide reductase activity"/>
    <property type="evidence" value="ECO:0000314"/>
    <property type="project" value="UniProtKB"/>
</dbReference>
<dbReference type="GO" id="GO:0030091">
    <property type="term" value="P:protein repair"/>
    <property type="evidence" value="ECO:0007669"/>
    <property type="project" value="InterPro"/>
</dbReference>
<dbReference type="GO" id="GO:0006979">
    <property type="term" value="P:response to oxidative stress"/>
    <property type="evidence" value="ECO:0000270"/>
    <property type="project" value="UniProtKB"/>
</dbReference>
<dbReference type="FunFam" id="2.170.150.20:FF:000001">
    <property type="entry name" value="Peptide methionine sulfoxide reductase MsrB"/>
    <property type="match status" value="1"/>
</dbReference>
<dbReference type="Gene3D" id="2.170.150.20">
    <property type="entry name" value="Peptide methionine sulfoxide reductase"/>
    <property type="match status" value="1"/>
</dbReference>
<dbReference type="InterPro" id="IPR028427">
    <property type="entry name" value="Met_Sox_Rdtase_MsrB"/>
</dbReference>
<dbReference type="InterPro" id="IPR002579">
    <property type="entry name" value="Met_Sox_Rdtase_MsrB_dom"/>
</dbReference>
<dbReference type="InterPro" id="IPR011057">
    <property type="entry name" value="Mss4-like_sf"/>
</dbReference>
<dbReference type="NCBIfam" id="TIGR00357">
    <property type="entry name" value="peptide-methionine (R)-S-oxide reductase MsrB"/>
    <property type="match status" value="1"/>
</dbReference>
<dbReference type="PANTHER" id="PTHR10173">
    <property type="entry name" value="METHIONINE SULFOXIDE REDUCTASE"/>
    <property type="match status" value="1"/>
</dbReference>
<dbReference type="PANTHER" id="PTHR10173:SF52">
    <property type="entry name" value="METHIONINE-R-SULFOXIDE REDUCTASE B1"/>
    <property type="match status" value="1"/>
</dbReference>
<dbReference type="Pfam" id="PF01641">
    <property type="entry name" value="SelR"/>
    <property type="match status" value="1"/>
</dbReference>
<dbReference type="SUPFAM" id="SSF51316">
    <property type="entry name" value="Mss4-like"/>
    <property type="match status" value="1"/>
</dbReference>
<dbReference type="PROSITE" id="PS51790">
    <property type="entry name" value="MSRB"/>
    <property type="match status" value="1"/>
</dbReference>
<accession>Q9C8M2</accession>
<accession>A6QRB3</accession>
<accession>Q8LAR2</accession>
<proteinExistence type="evidence at protein level"/>
<comment type="function">
    <text evidence="5 6 7 8 9">Catalyzes the reduction of methionine sulfoxide (MetSO) to methionine in proteins. Specifically reduces the MetSO R-enantiomer. Plays a protective role against oxidative stress by restoring activity to proteins that have been inactivated by methionine oxidation. May play an essential function in association with MSRB2 in maintaining vegetative growth during environmental constraints, through the preservation of photosynthetic antennae. MSRB1 and MSRB2 account for most of the leaf peptide MSR capacity.</text>
</comment>
<comment type="catalytic activity">
    <reaction evidence="5 6 7">
        <text>L-methionyl-[protein] + [thioredoxin]-disulfide + H2O = L-methionyl-(R)-S-oxide-[protein] + [thioredoxin]-dithiol</text>
        <dbReference type="Rhea" id="RHEA:24164"/>
        <dbReference type="Rhea" id="RHEA-COMP:10698"/>
        <dbReference type="Rhea" id="RHEA-COMP:10700"/>
        <dbReference type="Rhea" id="RHEA-COMP:12313"/>
        <dbReference type="Rhea" id="RHEA-COMP:12314"/>
        <dbReference type="ChEBI" id="CHEBI:15377"/>
        <dbReference type="ChEBI" id="CHEBI:16044"/>
        <dbReference type="ChEBI" id="CHEBI:29950"/>
        <dbReference type="ChEBI" id="CHEBI:45764"/>
        <dbReference type="ChEBI" id="CHEBI:50058"/>
        <dbReference type="EC" id="1.8.4.12"/>
    </reaction>
</comment>
<comment type="cofactor">
    <cofactor evidence="1">
        <name>Zn(2+)</name>
        <dbReference type="ChEBI" id="CHEBI:29105"/>
    </cofactor>
    <text evidence="1">Binds 1 zinc ion per subunit.</text>
</comment>
<comment type="biophysicochemical properties">
    <kinetics>
        <KM evidence="5">78.5 uM for dabsyl methionine sulfoxide</KM>
        <text evidence="7">kcat is 0.075 sec(-1) with dabsyl-MetSO as substrate.</text>
    </kinetics>
</comment>
<comment type="subcellular location">
    <subcellularLocation>
        <location evidence="5">Plastid</location>
        <location evidence="5">Chloroplast</location>
    </subcellularLocation>
</comment>
<comment type="alternative products">
    <event type="alternative splicing"/>
    <isoform>
        <id>Q9C8M2-1</id>
        <name>1</name>
        <sequence type="displayed"/>
    </isoform>
    <isoform>
        <id>Q9C8M2-2</id>
        <name>2</name>
        <sequence type="described" ref="VSP_039509"/>
    </isoform>
</comment>
<comment type="tissue specificity">
    <text evidence="5">Expressed at low levels in stems, leaves, floral buds, flowers and siliques (at protein level).</text>
</comment>
<comment type="induction">
    <text evidence="5">By photooxidative stress.</text>
</comment>
<comment type="miscellaneous">
    <text>Lacks the conserved cysteine (here Thr-132) required for the reduction by thioredoxins (TRX) through a dithiol-disulfide exchange involving both redox-active Cys of TRX and MSRB. Reduced by thioredoxin CDSP32 which regenerates MSRB1 through the direct reduction of the sulfenic acid formed on the catalytic Cys, without the help of any other thiol compound. Also reduced by the glutahione/glutaredoxin (GSH/GRX) system via a glutathionylation step of the sulfenic acid and then by GRX reduction of the GSH-MSR adduct.</text>
</comment>
<comment type="similarity">
    <text evidence="13">Belongs to the MsrB Met sulfoxide reductase family.</text>
</comment>
<comment type="sequence caution" evidence="13">
    <conflict type="erroneous initiation">
        <sequence resource="EMBL-CDS" id="AAM65202"/>
    </conflict>
    <text>Truncated N-terminus.</text>
</comment>
<comment type="sequence caution" evidence="13">
    <conflict type="erroneous initiation">
        <sequence resource="EMBL-CDS" id="BAC41985"/>
    </conflict>
    <text>Truncated N-terminus.</text>
</comment>
<feature type="transit peptide" description="Chloroplast" evidence="2">
    <location>
        <begin position="1"/>
        <end position="63"/>
    </location>
</feature>
<feature type="chain" id="PRO_0000395519" description="Peptide methionine sulfoxide reductase B1, chloroplastic">
    <location>
        <begin position="64"/>
        <end position="202"/>
    </location>
</feature>
<feature type="domain" description="MsrB" evidence="3">
    <location>
        <begin position="75"/>
        <end position="197"/>
    </location>
</feature>
<feature type="region of interest" description="Disordered" evidence="4">
    <location>
        <begin position="48"/>
        <end position="67"/>
    </location>
</feature>
<feature type="active site" description="Nucleophile" evidence="3">
    <location>
        <position position="186"/>
    </location>
</feature>
<feature type="binding site" evidence="3">
    <location>
        <position position="114"/>
    </location>
    <ligand>
        <name>Zn(2+)</name>
        <dbReference type="ChEBI" id="CHEBI:29105"/>
    </ligand>
</feature>
<feature type="binding site" evidence="3">
    <location>
        <position position="117"/>
    </location>
    <ligand>
        <name>Zn(2+)</name>
        <dbReference type="ChEBI" id="CHEBI:29105"/>
    </ligand>
</feature>
<feature type="binding site" evidence="3">
    <location>
        <position position="163"/>
    </location>
    <ligand>
        <name>Zn(2+)</name>
        <dbReference type="ChEBI" id="CHEBI:29105"/>
    </ligand>
</feature>
<feature type="binding site" evidence="3">
    <location>
        <position position="166"/>
    </location>
    <ligand>
        <name>Zn(2+)</name>
        <dbReference type="ChEBI" id="CHEBI:29105"/>
    </ligand>
</feature>
<feature type="splice variant" id="VSP_039509" description="In isoform 2." evidence="12">
    <location>
        <begin position="124"/>
        <end position="130"/>
    </location>
</feature>
<feature type="mutagenesis site" description="Decreases activity 2-fold." evidence="7">
    <original>C</original>
    <variation>S</variation>
    <location>
        <position position="116"/>
    </location>
</feature>
<feature type="mutagenesis site" description="Decreases activity 6-fold." evidence="7">
    <original>T</original>
    <variation>C</variation>
    <location>
        <position position="132"/>
    </location>
</feature>
<feature type="mutagenesis site" description="Decreases activity 14-fold." evidence="7">
    <original>T</original>
    <variation>S</variation>
    <location>
        <position position="132"/>
    </location>
</feature>
<feature type="mutagenesis site" description="Loss of activity." evidence="7 9">
    <original>C</original>
    <variation>S</variation>
    <location>
        <position position="186"/>
    </location>
</feature>